<comment type="function">
    <text evidence="1">F(1)F(0) ATP synthase produces ATP from ADP in the presence of a proton or sodium gradient. F-type ATPases consist of two structural domains, F(1) containing the extramembraneous catalytic core and F(0) containing the membrane proton channel, linked together by a central stalk and a peripheral stalk. During catalysis, ATP synthesis in the catalytic domain of F(1) is coupled via a rotary mechanism of the central stalk subunits to proton translocation.</text>
</comment>
<comment type="function">
    <text evidence="1">Component of the F(0) channel, it forms part of the peripheral stalk, linking F(1) to F(0).</text>
</comment>
<comment type="subunit">
    <text evidence="1">F-type ATPases have 2 components, F(1) - the catalytic core - and F(0) - the membrane proton channel. F(1) has five subunits: alpha(3), beta(3), gamma(1), delta(1), epsilon(1). F(0) has four main subunits: a(1), b(1), b'(1) and c(10-14). The alpha and beta chains form an alternating ring which encloses part of the gamma chain. F(1) is attached to F(0) by a central stalk formed by the gamma and epsilon chains, while a peripheral stalk is formed by the delta, b and b' chains.</text>
</comment>
<comment type="subcellular location">
    <subcellularLocation>
        <location evidence="1">Plastid</location>
        <location evidence="1">Chloroplast thylakoid membrane</location>
        <topology evidence="1">Single-pass membrane protein</topology>
    </subcellularLocation>
</comment>
<comment type="miscellaneous">
    <text>In plastids the F-type ATPase is also known as CF(1)CF(0).</text>
</comment>
<comment type="similarity">
    <text evidence="1">Belongs to the ATPase B chain family.</text>
</comment>
<proteinExistence type="inferred from homology"/>
<organism>
    <name type="scientific">Brachypodium distachyon</name>
    <name type="common">Purple false brome</name>
    <name type="synonym">Trachynia distachya</name>
    <dbReference type="NCBI Taxonomy" id="15368"/>
    <lineage>
        <taxon>Eukaryota</taxon>
        <taxon>Viridiplantae</taxon>
        <taxon>Streptophyta</taxon>
        <taxon>Embryophyta</taxon>
        <taxon>Tracheophyta</taxon>
        <taxon>Spermatophyta</taxon>
        <taxon>Magnoliopsida</taxon>
        <taxon>Liliopsida</taxon>
        <taxon>Poales</taxon>
        <taxon>Poaceae</taxon>
        <taxon>BOP clade</taxon>
        <taxon>Pooideae</taxon>
        <taxon>Stipodae</taxon>
        <taxon>Brachypodieae</taxon>
        <taxon>Brachypodium</taxon>
    </lineage>
</organism>
<sequence length="183" mass="21087">MKNVTHSFVFLAHWPSAGSFGLNTDILATNLINLTVVVGVLIFFGKGVLKDLLDNRKQRILSTIRNSEELRRGTFEQLEKARIRLQKVELEADEYRMNGYSEIEREKENLINATSISLEQLEKSKNETLYFEKQRAMNQVRQRVFQQAVQGALGTLNSCLNTELHFRTIRANIGILGSMEWKR</sequence>
<gene>
    <name evidence="1" type="primary">atpF</name>
</gene>
<dbReference type="EMBL" id="EU325680">
    <property type="protein sequence ID" value="ACF08636.1"/>
    <property type="molecule type" value="Genomic_DNA"/>
</dbReference>
<dbReference type="RefSeq" id="YP_002000483.1">
    <property type="nucleotide sequence ID" value="NC_011032.1"/>
</dbReference>
<dbReference type="SMR" id="B3TN47"/>
<dbReference type="FunCoup" id="B3TN47">
    <property type="interactions" value="337"/>
</dbReference>
<dbReference type="STRING" id="15368.B3TN47"/>
<dbReference type="GeneID" id="6439854"/>
<dbReference type="KEGG" id="bdi:6439854"/>
<dbReference type="eggNOG" id="ENOG502S22I">
    <property type="taxonomic scope" value="Eukaryota"/>
</dbReference>
<dbReference type="InParanoid" id="B3TN47"/>
<dbReference type="Proteomes" id="UP000008810">
    <property type="component" value="Chloroplast"/>
</dbReference>
<dbReference type="GO" id="GO:0009535">
    <property type="term" value="C:chloroplast thylakoid membrane"/>
    <property type="evidence" value="ECO:0007669"/>
    <property type="project" value="UniProtKB-SubCell"/>
</dbReference>
<dbReference type="GO" id="GO:0045259">
    <property type="term" value="C:proton-transporting ATP synthase complex"/>
    <property type="evidence" value="ECO:0007669"/>
    <property type="project" value="UniProtKB-KW"/>
</dbReference>
<dbReference type="GO" id="GO:0046933">
    <property type="term" value="F:proton-transporting ATP synthase activity, rotational mechanism"/>
    <property type="evidence" value="ECO:0007669"/>
    <property type="project" value="UniProtKB-UniRule"/>
</dbReference>
<dbReference type="CDD" id="cd06503">
    <property type="entry name" value="ATP-synt_Fo_b"/>
    <property type="match status" value="1"/>
</dbReference>
<dbReference type="HAMAP" id="MF_01398">
    <property type="entry name" value="ATP_synth_b_bprime"/>
    <property type="match status" value="1"/>
</dbReference>
<dbReference type="InterPro" id="IPR002146">
    <property type="entry name" value="ATP_synth_b/b'su_bac/chlpt"/>
</dbReference>
<dbReference type="PANTHER" id="PTHR34264">
    <property type="entry name" value="ATP SYNTHASE SUBUNIT B, CHLOROPLASTIC"/>
    <property type="match status" value="1"/>
</dbReference>
<dbReference type="PANTHER" id="PTHR34264:SF8">
    <property type="entry name" value="ATP SYNTHASE SUBUNIT B, CHLOROPLASTIC"/>
    <property type="match status" value="1"/>
</dbReference>
<dbReference type="Pfam" id="PF00430">
    <property type="entry name" value="ATP-synt_B"/>
    <property type="match status" value="1"/>
</dbReference>
<accession>B3TN47</accession>
<keyword id="KW-0066">ATP synthesis</keyword>
<keyword id="KW-0138">CF(0)</keyword>
<keyword id="KW-0150">Chloroplast</keyword>
<keyword id="KW-0375">Hydrogen ion transport</keyword>
<keyword id="KW-0406">Ion transport</keyword>
<keyword id="KW-0472">Membrane</keyword>
<keyword id="KW-0934">Plastid</keyword>
<keyword id="KW-1185">Reference proteome</keyword>
<keyword id="KW-0793">Thylakoid</keyword>
<keyword id="KW-0812">Transmembrane</keyword>
<keyword id="KW-1133">Transmembrane helix</keyword>
<keyword id="KW-0813">Transport</keyword>
<protein>
    <recommendedName>
        <fullName evidence="1">ATP synthase subunit b, chloroplastic</fullName>
    </recommendedName>
    <alternativeName>
        <fullName evidence="1">ATP synthase F(0) sector subunit b</fullName>
    </alternativeName>
    <alternativeName>
        <fullName evidence="1">ATPase subunit I</fullName>
    </alternativeName>
</protein>
<reference key="1">
    <citation type="journal article" date="2008" name="BMC Res. Notes">
        <title>The complete chloroplast genome sequence of Brachypodium distachyon: sequence comparison and phylogenetic analysis of eight grass plastomes.</title>
        <authorList>
            <person name="Bortiri E."/>
            <person name="Coleman-Derr D."/>
            <person name="Lazo G.R."/>
            <person name="Anderson O.D."/>
            <person name="Gu Y.Q."/>
        </authorList>
    </citation>
    <scope>NUCLEOTIDE SEQUENCE [LARGE SCALE GENOMIC DNA]</scope>
    <source>
        <strain>cv. Bd21</strain>
    </source>
</reference>
<feature type="chain" id="PRO_0000368909" description="ATP synthase subunit b, chloroplastic">
    <location>
        <begin position="1"/>
        <end position="183"/>
    </location>
</feature>
<feature type="transmembrane region" description="Helical" evidence="1">
    <location>
        <begin position="27"/>
        <end position="49"/>
    </location>
</feature>
<geneLocation type="chloroplast"/>
<evidence type="ECO:0000255" key="1">
    <source>
        <dbReference type="HAMAP-Rule" id="MF_01398"/>
    </source>
</evidence>
<name>ATPF_BRADI</name>